<gene>
    <name type="primary">rpl3402</name>
    <name type="synonym">rpl34b</name>
    <name type="ORF">SPCC1322.15</name>
</gene>
<protein>
    <recommendedName>
        <fullName evidence="4">Large ribosomal subunit protein eL34B</fullName>
    </recommendedName>
    <alternativeName>
        <fullName>60S ribosomal protein L34-2</fullName>
    </alternativeName>
    <alternativeName>
        <fullName>60S ribosomal protein L34-B</fullName>
    </alternativeName>
</protein>
<dbReference type="EMBL" id="CU329672">
    <property type="protein sequence ID" value="CAA22868.1"/>
    <property type="molecule type" value="Genomic_DNA"/>
</dbReference>
<dbReference type="PIR" id="T40946">
    <property type="entry name" value="T40946"/>
</dbReference>
<dbReference type="RefSeq" id="NP_588143.1">
    <property type="nucleotide sequence ID" value="NM_001023133.2"/>
</dbReference>
<dbReference type="PDB" id="9AXT">
    <property type="method" value="EM"/>
    <property type="resolution" value="2.40 A"/>
    <property type="chains" value="Bs=1-111"/>
</dbReference>
<dbReference type="PDB" id="9AXU">
    <property type="method" value="EM"/>
    <property type="resolution" value="1.94 A"/>
    <property type="chains" value="s=1-111"/>
</dbReference>
<dbReference type="PDB" id="9AXV">
    <property type="method" value="EM"/>
    <property type="resolution" value="2.40 A"/>
    <property type="chains" value="Bs=1-111"/>
</dbReference>
<dbReference type="PDBsum" id="9AXT"/>
<dbReference type="PDBsum" id="9AXU"/>
<dbReference type="PDBsum" id="9AXV"/>
<dbReference type="EMDB" id="EMD-43972"/>
<dbReference type="EMDB" id="EMD-43973"/>
<dbReference type="EMDB" id="EMD-43976"/>
<dbReference type="SMR" id="Q9URT8"/>
<dbReference type="BioGRID" id="275396">
    <property type="interactions" value="7"/>
</dbReference>
<dbReference type="FunCoup" id="Q9URT8">
    <property type="interactions" value="498"/>
</dbReference>
<dbReference type="STRING" id="284812.Q9URT8"/>
<dbReference type="iPTMnet" id="Q9URT8"/>
<dbReference type="PaxDb" id="4896-SPCC1322.15.1"/>
<dbReference type="EnsemblFungi" id="SPCC1322.15.1">
    <property type="protein sequence ID" value="SPCC1322.15.1:pep"/>
    <property type="gene ID" value="SPCC1322.15"/>
</dbReference>
<dbReference type="GeneID" id="2538815"/>
<dbReference type="KEGG" id="spo:2538815"/>
<dbReference type="PomBase" id="SPCC1322.15">
    <property type="gene designation" value="rpl3402"/>
</dbReference>
<dbReference type="VEuPathDB" id="FungiDB:SPCC1322.15"/>
<dbReference type="eggNOG" id="KOG1790">
    <property type="taxonomic scope" value="Eukaryota"/>
</dbReference>
<dbReference type="HOGENOM" id="CLU_118652_1_1_1"/>
<dbReference type="InParanoid" id="Q9URT8"/>
<dbReference type="OMA" id="WMNWILV"/>
<dbReference type="PhylomeDB" id="Q9URT8"/>
<dbReference type="PRO" id="PR:Q9URT8"/>
<dbReference type="Proteomes" id="UP000002485">
    <property type="component" value="Chromosome III"/>
</dbReference>
<dbReference type="GO" id="GO:0005829">
    <property type="term" value="C:cytosol"/>
    <property type="evidence" value="ECO:0007005"/>
    <property type="project" value="PomBase"/>
</dbReference>
<dbReference type="GO" id="GO:0022625">
    <property type="term" value="C:cytosolic large ribosomal subunit"/>
    <property type="evidence" value="ECO:0000269"/>
    <property type="project" value="PomBase"/>
</dbReference>
<dbReference type="GO" id="GO:0005730">
    <property type="term" value="C:nucleolus"/>
    <property type="evidence" value="ECO:0007005"/>
    <property type="project" value="PomBase"/>
</dbReference>
<dbReference type="GO" id="GO:0030684">
    <property type="term" value="C:preribosome"/>
    <property type="evidence" value="ECO:0000314"/>
    <property type="project" value="PomBase"/>
</dbReference>
<dbReference type="GO" id="GO:0003735">
    <property type="term" value="F:structural constituent of ribosome"/>
    <property type="evidence" value="ECO:0000318"/>
    <property type="project" value="GO_Central"/>
</dbReference>
<dbReference type="GO" id="GO:0002181">
    <property type="term" value="P:cytoplasmic translation"/>
    <property type="evidence" value="ECO:0000266"/>
    <property type="project" value="PomBase"/>
</dbReference>
<dbReference type="GO" id="GO:0042254">
    <property type="term" value="P:ribosome biogenesis"/>
    <property type="evidence" value="ECO:0000318"/>
    <property type="project" value="GO_Central"/>
</dbReference>
<dbReference type="Gene3D" id="6.20.340.10">
    <property type="match status" value="1"/>
</dbReference>
<dbReference type="Gene3D" id="6.20.370.70">
    <property type="match status" value="1"/>
</dbReference>
<dbReference type="InterPro" id="IPR008195">
    <property type="entry name" value="Ribosomal_eL34"/>
</dbReference>
<dbReference type="InterPro" id="IPR038562">
    <property type="entry name" value="Ribosomal_eL34_C_sf"/>
</dbReference>
<dbReference type="InterPro" id="IPR018065">
    <property type="entry name" value="Ribosomal_eL34_CS"/>
</dbReference>
<dbReference type="PANTHER" id="PTHR46595">
    <property type="entry name" value="60S RIBOSOMAL PROTEIN L34"/>
    <property type="match status" value="1"/>
</dbReference>
<dbReference type="Pfam" id="PF01199">
    <property type="entry name" value="Ribosomal_L34e"/>
    <property type="match status" value="1"/>
</dbReference>
<dbReference type="PRINTS" id="PR01250">
    <property type="entry name" value="RIBOSOMALL34"/>
</dbReference>
<dbReference type="PROSITE" id="PS01145">
    <property type="entry name" value="RIBOSOMAL_L34E"/>
    <property type="match status" value="1"/>
</dbReference>
<name>RL34B_SCHPO</name>
<evidence type="ECO:0000250" key="1">
    <source>
        <dbReference type="UniProtKB" id="P40525"/>
    </source>
</evidence>
<evidence type="ECO:0000269" key="2">
    <source>
    </source>
</evidence>
<evidence type="ECO:0000269" key="3">
    <source>
    </source>
</evidence>
<evidence type="ECO:0000305" key="4"/>
<organism>
    <name type="scientific">Schizosaccharomyces pombe (strain 972 / ATCC 24843)</name>
    <name type="common">Fission yeast</name>
    <dbReference type="NCBI Taxonomy" id="284812"/>
    <lineage>
        <taxon>Eukaryota</taxon>
        <taxon>Fungi</taxon>
        <taxon>Dikarya</taxon>
        <taxon>Ascomycota</taxon>
        <taxon>Taphrinomycotina</taxon>
        <taxon>Schizosaccharomycetes</taxon>
        <taxon>Schizosaccharomycetales</taxon>
        <taxon>Schizosaccharomycetaceae</taxon>
        <taxon>Schizosaccharomyces</taxon>
    </lineage>
</organism>
<keyword id="KW-0002">3D-structure</keyword>
<keyword id="KW-0963">Cytoplasm</keyword>
<keyword id="KW-0539">Nucleus</keyword>
<keyword id="KW-0597">Phosphoprotein</keyword>
<keyword id="KW-1185">Reference proteome</keyword>
<keyword id="KW-0687">Ribonucleoprotein</keyword>
<keyword id="KW-0689">Ribosomal protein</keyword>
<proteinExistence type="evidence at protein level"/>
<accession>Q9URT8</accession>
<reference key="1">
    <citation type="journal article" date="2002" name="Nature">
        <title>The genome sequence of Schizosaccharomyces pombe.</title>
        <authorList>
            <person name="Wood V."/>
            <person name="Gwilliam R."/>
            <person name="Rajandream M.A."/>
            <person name="Lyne M.H."/>
            <person name="Lyne R."/>
            <person name="Stewart A."/>
            <person name="Sgouros J.G."/>
            <person name="Peat N."/>
            <person name="Hayles J."/>
            <person name="Baker S.G."/>
            <person name="Basham D."/>
            <person name="Bowman S."/>
            <person name="Brooks K."/>
            <person name="Brown D."/>
            <person name="Brown S."/>
            <person name="Chillingworth T."/>
            <person name="Churcher C.M."/>
            <person name="Collins M."/>
            <person name="Connor R."/>
            <person name="Cronin A."/>
            <person name="Davis P."/>
            <person name="Feltwell T."/>
            <person name="Fraser A."/>
            <person name="Gentles S."/>
            <person name="Goble A."/>
            <person name="Hamlin N."/>
            <person name="Harris D.E."/>
            <person name="Hidalgo J."/>
            <person name="Hodgson G."/>
            <person name="Holroyd S."/>
            <person name="Hornsby T."/>
            <person name="Howarth S."/>
            <person name="Huckle E.J."/>
            <person name="Hunt S."/>
            <person name="Jagels K."/>
            <person name="James K.D."/>
            <person name="Jones L."/>
            <person name="Jones M."/>
            <person name="Leather S."/>
            <person name="McDonald S."/>
            <person name="McLean J."/>
            <person name="Mooney P."/>
            <person name="Moule S."/>
            <person name="Mungall K.L."/>
            <person name="Murphy L.D."/>
            <person name="Niblett D."/>
            <person name="Odell C."/>
            <person name="Oliver K."/>
            <person name="O'Neil S."/>
            <person name="Pearson D."/>
            <person name="Quail M.A."/>
            <person name="Rabbinowitsch E."/>
            <person name="Rutherford K.M."/>
            <person name="Rutter S."/>
            <person name="Saunders D."/>
            <person name="Seeger K."/>
            <person name="Sharp S."/>
            <person name="Skelton J."/>
            <person name="Simmonds M.N."/>
            <person name="Squares R."/>
            <person name="Squares S."/>
            <person name="Stevens K."/>
            <person name="Taylor K."/>
            <person name="Taylor R.G."/>
            <person name="Tivey A."/>
            <person name="Walsh S.V."/>
            <person name="Warren T."/>
            <person name="Whitehead S."/>
            <person name="Woodward J.R."/>
            <person name="Volckaert G."/>
            <person name="Aert R."/>
            <person name="Robben J."/>
            <person name="Grymonprez B."/>
            <person name="Weltjens I."/>
            <person name="Vanstreels E."/>
            <person name="Rieger M."/>
            <person name="Schaefer M."/>
            <person name="Mueller-Auer S."/>
            <person name="Gabel C."/>
            <person name="Fuchs M."/>
            <person name="Duesterhoeft A."/>
            <person name="Fritzc C."/>
            <person name="Holzer E."/>
            <person name="Moestl D."/>
            <person name="Hilbert H."/>
            <person name="Borzym K."/>
            <person name="Langer I."/>
            <person name="Beck A."/>
            <person name="Lehrach H."/>
            <person name="Reinhardt R."/>
            <person name="Pohl T.M."/>
            <person name="Eger P."/>
            <person name="Zimmermann W."/>
            <person name="Wedler H."/>
            <person name="Wambutt R."/>
            <person name="Purnelle B."/>
            <person name="Goffeau A."/>
            <person name="Cadieu E."/>
            <person name="Dreano S."/>
            <person name="Gloux S."/>
            <person name="Lelaure V."/>
            <person name="Mottier S."/>
            <person name="Galibert F."/>
            <person name="Aves S.J."/>
            <person name="Xiang Z."/>
            <person name="Hunt C."/>
            <person name="Moore K."/>
            <person name="Hurst S.M."/>
            <person name="Lucas M."/>
            <person name="Rochet M."/>
            <person name="Gaillardin C."/>
            <person name="Tallada V.A."/>
            <person name="Garzon A."/>
            <person name="Thode G."/>
            <person name="Daga R.R."/>
            <person name="Cruzado L."/>
            <person name="Jimenez J."/>
            <person name="Sanchez M."/>
            <person name="del Rey F."/>
            <person name="Benito J."/>
            <person name="Dominguez A."/>
            <person name="Revuelta J.L."/>
            <person name="Moreno S."/>
            <person name="Armstrong J."/>
            <person name="Forsburg S.L."/>
            <person name="Cerutti L."/>
            <person name="Lowe T."/>
            <person name="McCombie W.R."/>
            <person name="Paulsen I."/>
            <person name="Potashkin J."/>
            <person name="Shpakovski G.V."/>
            <person name="Ussery D."/>
            <person name="Barrell B.G."/>
            <person name="Nurse P."/>
        </authorList>
    </citation>
    <scope>NUCLEOTIDE SEQUENCE [LARGE SCALE GENOMIC DNA]</scope>
    <source>
        <strain>972 / ATCC 24843</strain>
    </source>
</reference>
<reference key="2">
    <citation type="journal article" date="2006" name="Nat. Biotechnol.">
        <title>ORFeome cloning and global analysis of protein localization in the fission yeast Schizosaccharomyces pombe.</title>
        <authorList>
            <person name="Matsuyama A."/>
            <person name="Arai R."/>
            <person name="Yashiroda Y."/>
            <person name="Shirai A."/>
            <person name="Kamata A."/>
            <person name="Sekido S."/>
            <person name="Kobayashi Y."/>
            <person name="Hashimoto A."/>
            <person name="Hamamoto M."/>
            <person name="Hiraoka Y."/>
            <person name="Horinouchi S."/>
            <person name="Yoshida M."/>
        </authorList>
    </citation>
    <scope>SUBCELLULAR LOCATION [LARGE SCALE ANALYSIS]</scope>
</reference>
<reference key="3">
    <citation type="journal article" date="2008" name="J. Proteome Res.">
        <title>Phosphoproteome analysis of fission yeast.</title>
        <authorList>
            <person name="Wilson-Grady J.T."/>
            <person name="Villen J."/>
            <person name="Gygi S.P."/>
        </authorList>
    </citation>
    <scope>PHOSPHORYLATION [LARGE SCALE ANALYSIS] AT TYR-76</scope>
    <scope>IDENTIFICATION BY MASS SPECTROMETRY</scope>
</reference>
<comment type="function">
    <text evidence="1">Component of the ribosome, a large ribonucleoprotein complex responsible for the synthesis of proteins in the cell. The small ribosomal subunit (SSU) binds messenger RNAs (mRNAs) and translates the encoded message by selecting cognate aminoacyl-transfer RNA (tRNA) molecules. The large subunit (LSU) contains the ribosomal catalytic site termed the peptidyl transferase center (PTC), which catalyzes the formation of peptide bonds, thereby polymerizing the amino acids delivered by tRNAs into a polypeptide chain. The nascent polypeptides leave the ribosome through a tunnel in the LSU and interact with protein factors that function in enzymatic processing, targeting, and the membrane insertion of nascent chains at the exit of the ribosomal tunnel.</text>
</comment>
<comment type="subunit">
    <text evidence="1">Component of the large ribosomal subunit (LSU). Mature yeast ribosomes consist of a small (40S) and a large (60S) subunit. The 40S small subunit contains 1 molecule of ribosomal RNA (18S rRNA) and at least 33 different proteins. The large 60S subunit contains 3 rRNA molecules (25S, 5.8S and 5S rRNA) and at least 46 different proteins.</text>
</comment>
<comment type="subcellular location">
    <subcellularLocation>
        <location evidence="2">Cytoplasm</location>
    </subcellularLocation>
    <subcellularLocation>
        <location evidence="2">Nucleus</location>
        <location evidence="2">Nucleolus</location>
    </subcellularLocation>
</comment>
<comment type="miscellaneous">
    <text>There are 2 genes for eL34 in S.pombe.</text>
</comment>
<comment type="similarity">
    <text evidence="4">Belongs to the eukaryotic ribosomal protein eL34 family.</text>
</comment>
<feature type="chain" id="PRO_0000131844" description="Large ribosomal subunit protein eL34B">
    <location>
        <begin position="1"/>
        <end position="111"/>
    </location>
</feature>
<feature type="modified residue" description="Phosphotyrosine" evidence="3">
    <location>
        <position position="76"/>
    </location>
</feature>
<sequence>MAQRVTYRRRLAYNTRSNKTRIIKTPGNNIRYLHIKKLGTIPRCGDTGVPLQGIPALRPREFARLSHNQKKVQRAYGGCLSANAVKDRIVRAFLIEEQKIVKQKLKQMSQK</sequence>